<organism>
    <name type="scientific">Populus euphratica</name>
    <name type="common">Euphrates poplar</name>
    <dbReference type="NCBI Taxonomy" id="75702"/>
    <lineage>
        <taxon>Eukaryota</taxon>
        <taxon>Viridiplantae</taxon>
        <taxon>Streptophyta</taxon>
        <taxon>Embryophyta</taxon>
        <taxon>Tracheophyta</taxon>
        <taxon>Spermatophyta</taxon>
        <taxon>Magnoliopsida</taxon>
        <taxon>eudicotyledons</taxon>
        <taxon>Gunneridae</taxon>
        <taxon>Pentapetalae</taxon>
        <taxon>rosids</taxon>
        <taxon>fabids</taxon>
        <taxon>Malpighiales</taxon>
        <taxon>Salicaceae</taxon>
        <taxon>Saliceae</taxon>
        <taxon>Populus</taxon>
    </lineage>
</organism>
<keyword id="KW-0903">Direct protein sequencing</keyword>
<keyword id="KW-1185">Reference proteome</keyword>
<proteinExistence type="evidence at protein level"/>
<protein>
    <recommendedName>
        <fullName>Stable protein 1</fullName>
    </recommendedName>
</protein>
<dbReference type="SMR" id="P84986"/>
<dbReference type="Proteomes" id="UP000694918">
    <property type="component" value="Unplaced"/>
</dbReference>
<dbReference type="Gene3D" id="3.30.70.100">
    <property type="match status" value="1"/>
</dbReference>
<dbReference type="InterPro" id="IPR013097">
    <property type="entry name" value="Dabb"/>
</dbReference>
<dbReference type="InterPro" id="IPR011008">
    <property type="entry name" value="Dimeric_a/b-barrel"/>
</dbReference>
<dbReference type="Pfam" id="PF07876">
    <property type="entry name" value="Dabb"/>
    <property type="match status" value="1"/>
</dbReference>
<dbReference type="SUPFAM" id="SSF54909">
    <property type="entry name" value="Dimeric alpha+beta barrel"/>
    <property type="match status" value="1"/>
</dbReference>
<dbReference type="PROSITE" id="PS51502">
    <property type="entry name" value="S_R_A_B_BARREL"/>
    <property type="match status" value="1"/>
</dbReference>
<evidence type="ECO:0000255" key="1">
    <source>
        <dbReference type="PROSITE-ProRule" id="PRU00835"/>
    </source>
</evidence>
<evidence type="ECO:0000269" key="2">
    <source ref="1"/>
</evidence>
<evidence type="ECO:0000303" key="3">
    <source ref="1"/>
</evidence>
<evidence type="ECO:0000305" key="4"/>
<comment type="caution">
    <text evidence="2">The order of the peptides shown is unknown.</text>
</comment>
<sequence length="56" mass="6151">GYTHAFESTFESKSGLQEYLDSAALAAFAEGFLPTLSQRSFNWGTDLGMESAELNR</sequence>
<accession>P84986</accession>
<reference evidence="4" key="1">
    <citation type="thesis" date="2006" institute="ICAT-FCUL" country="Portugal">
        <title>Molecular analysis of Populus euphratica Oliv. response to moderate heat stress.</title>
        <authorList>
            <person name="Ferreira S."/>
        </authorList>
    </citation>
    <scope>PROTEIN SEQUENCE</scope>
    <source>
        <tissue evidence="2">Leaf</tissue>
    </source>
</reference>
<name>STBP1_POPEU</name>
<feature type="chain" id="PRO_0000304520" description="Stable protein 1">
    <location>
        <begin position="1" status="less than"/>
        <end position="56" status="greater than"/>
    </location>
</feature>
<feature type="domain" description="Stress-response A/B barrel" evidence="1">
    <location>
        <begin position="1"/>
        <end position="44"/>
    </location>
</feature>
<feature type="non-consecutive residues" evidence="3">
    <location>
        <begin position="13"/>
        <end position="14"/>
    </location>
</feature>
<feature type="non-consecutive residues" evidence="3">
    <location>
        <begin position="39"/>
        <end position="40"/>
    </location>
</feature>
<feature type="non-terminal residue" evidence="3">
    <location>
        <position position="1"/>
    </location>
</feature>
<feature type="non-terminal residue" evidence="3">
    <location>
        <position position="56"/>
    </location>
</feature>